<feature type="chain" id="PRO_0000292846" description="Cell cycle control protein 50C">
    <location>
        <begin position="1"/>
        <end position="344"/>
    </location>
</feature>
<feature type="topological domain" description="Cytoplasmic" evidence="1">
    <location>
        <begin position="1"/>
        <end position="34"/>
    </location>
</feature>
<feature type="transmembrane region" description="Helical" evidence="1">
    <location>
        <begin position="35"/>
        <end position="55"/>
    </location>
</feature>
<feature type="topological domain" description="Extracellular" evidence="1">
    <location>
        <begin position="56"/>
        <end position="306"/>
    </location>
</feature>
<feature type="transmembrane region" description="Helical" evidence="1">
    <location>
        <begin position="307"/>
        <end position="327"/>
    </location>
</feature>
<feature type="topological domain" description="Cytoplasmic" evidence="1">
    <location>
        <begin position="328"/>
        <end position="344"/>
    </location>
</feature>
<feature type="glycosylation site" description="N-linked (GlcNAc...) asparagine" evidence="1">
    <location>
        <position position="66"/>
    </location>
</feature>
<feature type="glycosylation site" description="N-linked (GlcNAc...) asparagine" evidence="1">
    <location>
        <position position="261"/>
    </location>
</feature>
<feature type="splice variant" id="VSP_026449" description="In isoform 2." evidence="3">
    <original>NFPVTRFQGEK</original>
    <variation>SILSYHFSFWR</variation>
    <location>
        <begin position="282"/>
        <end position="292"/>
    </location>
</feature>
<feature type="splice variant" id="VSP_026450" description="In isoform 2." evidence="3">
    <location>
        <begin position="293"/>
        <end position="344"/>
    </location>
</feature>
<proteinExistence type="evidence at transcript level"/>
<accession>Q95JK4</accession>
<accession>Q95JU6</accession>
<protein>
    <recommendedName>
        <fullName>Cell cycle control protein 50C</fullName>
    </recommendedName>
    <alternativeName>
        <fullName>Transmembrane protein 30C</fullName>
    </alternativeName>
</protein>
<comment type="subcellular location">
    <subcellularLocation>
        <location evidence="4">Membrane</location>
        <topology evidence="4">Multi-pass membrane protein</topology>
    </subcellularLocation>
</comment>
<comment type="alternative products">
    <event type="alternative splicing"/>
    <isoform>
        <id>Q95JK4-1</id>
        <name>1</name>
        <sequence type="displayed"/>
    </isoform>
    <isoform>
        <id>Q95JK4-2</id>
        <name>2</name>
        <sequence type="described" ref="VSP_026449 VSP_026450"/>
    </isoform>
</comment>
<comment type="tissue specificity">
    <text evidence="2">Specifically expressed in testis.</text>
</comment>
<comment type="similarity">
    <text evidence="4">Belongs to the CDC50/LEM3 family.</text>
</comment>
<reference key="1">
    <citation type="journal article" date="2002" name="BMC Genomics">
        <title>Cynomolgus monkey testicular cDNAs for discovery of novel human genes in the human genome sequence.</title>
        <authorList>
            <person name="Osada N."/>
            <person name="Hida M."/>
            <person name="Kusuda J."/>
            <person name="Tanuma R."/>
            <person name="Hirata M."/>
            <person name="Suto Y."/>
            <person name="Hirai M."/>
            <person name="Terao K."/>
            <person name="Sugano S."/>
            <person name="Hashimoto K."/>
        </authorList>
    </citation>
    <scope>NUCLEOTIDE SEQUENCE [LARGE SCALE MRNA] (ISOFORMS 1 AND 2)</scope>
    <source>
        <tissue>Testis</tissue>
    </source>
</reference>
<reference key="2">
    <citation type="journal article" date="2007" name="Gene">
        <title>Aberrant termination of reproduction-related TMEM30C transcripts in the hominoids.</title>
        <authorList>
            <person name="Osada N."/>
            <person name="Hashimoto K."/>
            <person name="Hirai M."/>
            <person name="Kusuda J."/>
        </authorList>
    </citation>
    <scope>TISSUE SPECIFICITY</scope>
</reference>
<evidence type="ECO:0000255" key="1"/>
<evidence type="ECO:0000269" key="2">
    <source>
    </source>
</evidence>
<evidence type="ECO:0000303" key="3">
    <source>
    </source>
</evidence>
<evidence type="ECO:0000305" key="4"/>
<organism>
    <name type="scientific">Macaca fascicularis</name>
    <name type="common">Crab-eating macaque</name>
    <name type="synonym">Cynomolgus monkey</name>
    <dbReference type="NCBI Taxonomy" id="9541"/>
    <lineage>
        <taxon>Eukaryota</taxon>
        <taxon>Metazoa</taxon>
        <taxon>Chordata</taxon>
        <taxon>Craniata</taxon>
        <taxon>Vertebrata</taxon>
        <taxon>Euteleostomi</taxon>
        <taxon>Mammalia</taxon>
        <taxon>Eutheria</taxon>
        <taxon>Euarchontoglires</taxon>
        <taxon>Primates</taxon>
        <taxon>Haplorrhini</taxon>
        <taxon>Catarrhini</taxon>
        <taxon>Cercopithecidae</taxon>
        <taxon>Cercopithecinae</taxon>
        <taxon>Macaca</taxon>
    </lineage>
</organism>
<name>CC50C_MACFA</name>
<dbReference type="EMBL" id="AB070082">
    <property type="protein sequence ID" value="BAB63027.1"/>
    <property type="molecule type" value="mRNA"/>
</dbReference>
<dbReference type="EMBL" id="AB070177">
    <property type="protein sequence ID" value="BAB63122.1"/>
    <property type="molecule type" value="mRNA"/>
</dbReference>
<dbReference type="SMR" id="Q95JK4"/>
<dbReference type="STRING" id="9541.ENSMFAP00000044836"/>
<dbReference type="GlyCosmos" id="Q95JK4">
    <property type="glycosylation" value="2 sites, No reported glycans"/>
</dbReference>
<dbReference type="eggNOG" id="KOG2952">
    <property type="taxonomic scope" value="Eukaryota"/>
</dbReference>
<dbReference type="Proteomes" id="UP000233100">
    <property type="component" value="Unplaced"/>
</dbReference>
<dbReference type="GO" id="GO:0005783">
    <property type="term" value="C:endoplasmic reticulum"/>
    <property type="evidence" value="ECO:0007669"/>
    <property type="project" value="TreeGrafter"/>
</dbReference>
<dbReference type="GO" id="GO:0005794">
    <property type="term" value="C:Golgi apparatus"/>
    <property type="evidence" value="ECO:0007669"/>
    <property type="project" value="TreeGrafter"/>
</dbReference>
<dbReference type="GO" id="GO:0005886">
    <property type="term" value="C:plasma membrane"/>
    <property type="evidence" value="ECO:0007669"/>
    <property type="project" value="TreeGrafter"/>
</dbReference>
<dbReference type="GO" id="GO:0045332">
    <property type="term" value="P:phospholipid translocation"/>
    <property type="evidence" value="ECO:0007669"/>
    <property type="project" value="TreeGrafter"/>
</dbReference>
<dbReference type="InterPro" id="IPR005045">
    <property type="entry name" value="CDC50/LEM3_fam"/>
</dbReference>
<dbReference type="PANTHER" id="PTHR10926">
    <property type="entry name" value="CELL CYCLE CONTROL PROTEIN 50"/>
    <property type="match status" value="1"/>
</dbReference>
<dbReference type="PANTHER" id="PTHR10926:SF1">
    <property type="entry name" value="CELL CYCLE CONTROL PROTEIN 50C"/>
    <property type="match status" value="1"/>
</dbReference>
<dbReference type="Pfam" id="PF03381">
    <property type="entry name" value="CDC50"/>
    <property type="match status" value="1"/>
</dbReference>
<dbReference type="PIRSF" id="PIRSF015840">
    <property type="entry name" value="DUF284_TM_euk"/>
    <property type="match status" value="1"/>
</dbReference>
<gene>
    <name type="primary">TMEM30C</name>
    <name type="synonym">CDC50C</name>
    <name type="ORF">QtsA-12626</name>
    <name type="ORF">QtsA-16374</name>
</gene>
<keyword id="KW-0025">Alternative splicing</keyword>
<keyword id="KW-0325">Glycoprotein</keyword>
<keyword id="KW-0472">Membrane</keyword>
<keyword id="KW-1185">Reference proteome</keyword>
<keyword id="KW-0812">Transmembrane</keyword>
<keyword id="KW-1133">Transmembrane helix</keyword>
<sequence>MEETPQHCLSRLPDNSALKQQELPAHRLYFTARRVLFVFFTTGIFCLCMGIILILSARSTQEIEINYTRICANCAKLRENASNFDKECTCSIPFYLSGKMMGNVYMYYKLYGFYQNLYRYVRSRSNRQLVGKDVKAVEDCAPFKMSDNKTPIVPCGAIANSMFNDTIILSHNINSSVQIKVPMLKSGLTWWTDKYVKFQNPSSKNLADEFRGTTKPPNWPKPIYDLDKKDPRNNGFLNDDFIVWMRAAAFPTFKKLYGRLNRTHHFIEGLPAGNYSFNITYNFPVTRFQGEKSVVLSTLTWCGGNSLFLGLAYTVTGAITWLASFTMMAIHITLKNKQMSFFHQ</sequence>